<evidence type="ECO:0000250" key="1"/>
<evidence type="ECO:0000255" key="2"/>
<evidence type="ECO:0000269" key="3">
    <source>
    </source>
</evidence>
<evidence type="ECO:0000303" key="4">
    <source>
    </source>
</evidence>
<evidence type="ECO:0000305" key="5"/>
<dbReference type="EC" id="2.7.1.164"/>
<dbReference type="EMBL" id="AK127173">
    <property type="protein sequence ID" value="BAC86867.1"/>
    <property type="molecule type" value="mRNA"/>
</dbReference>
<dbReference type="EMBL" id="BC035344">
    <property type="protein sequence ID" value="AAH35344.1"/>
    <property type="molecule type" value="mRNA"/>
</dbReference>
<dbReference type="CCDS" id="CCDS7633.1">
    <molecule id="Q8IV42-1"/>
</dbReference>
<dbReference type="RefSeq" id="NP_699167.2">
    <molecule id="Q8IV42-1"/>
    <property type="nucleotide sequence ID" value="NM_153336.3"/>
</dbReference>
<dbReference type="BioGRID" id="125618">
    <property type="interactions" value="7"/>
</dbReference>
<dbReference type="FunCoup" id="Q8IV42">
    <property type="interactions" value="303"/>
</dbReference>
<dbReference type="STRING" id="9606.ENSP00000384653"/>
<dbReference type="GlyGen" id="Q8IV42">
    <property type="glycosylation" value="1 site, 1 O-linked glycan (1 site)"/>
</dbReference>
<dbReference type="iPTMnet" id="Q8IV42"/>
<dbReference type="PhosphoSitePlus" id="Q8IV42"/>
<dbReference type="BioMuta" id="PSTK"/>
<dbReference type="DMDM" id="116242735"/>
<dbReference type="jPOST" id="Q8IV42"/>
<dbReference type="MassIVE" id="Q8IV42"/>
<dbReference type="PaxDb" id="9606-ENSP00000357882"/>
<dbReference type="PeptideAtlas" id="Q8IV42"/>
<dbReference type="ProteomicsDB" id="70656">
    <molecule id="Q8IV42-1"/>
</dbReference>
<dbReference type="ProteomicsDB" id="70657">
    <molecule id="Q8IV42-2"/>
</dbReference>
<dbReference type="Pumba" id="Q8IV42"/>
<dbReference type="Antibodypedia" id="46364">
    <property type="antibodies" value="56 antibodies from 14 providers"/>
</dbReference>
<dbReference type="DNASU" id="118672"/>
<dbReference type="Ensembl" id="ENST00000368887.7">
    <molecule id="Q8IV42-1"/>
    <property type="protein sequence ID" value="ENSP00000357882.3"/>
    <property type="gene ID" value="ENSG00000179988.15"/>
</dbReference>
<dbReference type="Ensembl" id="ENST00000405485.2">
    <molecule id="Q8IV42-1"/>
    <property type="protein sequence ID" value="ENSP00000384764.2"/>
    <property type="gene ID" value="ENSG00000179988.15"/>
</dbReference>
<dbReference type="GeneID" id="118672"/>
<dbReference type="KEGG" id="hsa:118672"/>
<dbReference type="UCSC" id="uc001lgy.2">
    <molecule id="Q8IV42-1"/>
    <property type="organism name" value="human"/>
</dbReference>
<dbReference type="AGR" id="HGNC:28578"/>
<dbReference type="CTD" id="118672"/>
<dbReference type="DisGeNET" id="118672"/>
<dbReference type="GeneCards" id="PSTK"/>
<dbReference type="HGNC" id="HGNC:28578">
    <property type="gene designation" value="PSTK"/>
</dbReference>
<dbReference type="HPA" id="ENSG00000179988">
    <property type="expression patterns" value="Low tissue specificity"/>
</dbReference>
<dbReference type="MIM" id="611310">
    <property type="type" value="gene"/>
</dbReference>
<dbReference type="neXtProt" id="NX_Q8IV42"/>
<dbReference type="OpenTargets" id="ENSG00000179988"/>
<dbReference type="PharmGKB" id="PA162400268"/>
<dbReference type="VEuPathDB" id="HostDB:ENSG00000179988"/>
<dbReference type="eggNOG" id="KOG4622">
    <property type="taxonomic scope" value="Eukaryota"/>
</dbReference>
<dbReference type="GeneTree" id="ENSGT00390000017554"/>
<dbReference type="InParanoid" id="Q8IV42"/>
<dbReference type="OrthoDB" id="9972657at2759"/>
<dbReference type="PAN-GO" id="Q8IV42">
    <property type="GO annotations" value="2 GO annotations based on evolutionary models"/>
</dbReference>
<dbReference type="PhylomeDB" id="Q8IV42"/>
<dbReference type="TreeFam" id="TF321264"/>
<dbReference type="PathwayCommons" id="Q8IV42"/>
<dbReference type="Reactome" id="R-HSA-2408557">
    <property type="pathway name" value="Selenocysteine synthesis"/>
</dbReference>
<dbReference type="UniPathway" id="UPA00906">
    <property type="reaction ID" value="UER00897"/>
</dbReference>
<dbReference type="BioGRID-ORCS" id="118672">
    <property type="hits" value="410 hits in 1164 CRISPR screens"/>
</dbReference>
<dbReference type="ChiTaRS" id="PSTK">
    <property type="organism name" value="human"/>
</dbReference>
<dbReference type="GenomeRNAi" id="118672"/>
<dbReference type="Pharos" id="Q8IV42">
    <property type="development level" value="Tbio"/>
</dbReference>
<dbReference type="PRO" id="PR:Q8IV42"/>
<dbReference type="Proteomes" id="UP000005640">
    <property type="component" value="Chromosome 10"/>
</dbReference>
<dbReference type="RNAct" id="Q8IV42">
    <property type="molecule type" value="protein"/>
</dbReference>
<dbReference type="Bgee" id="ENSG00000179988">
    <property type="expression patterns" value="Expressed in male germ line stem cell (sensu Vertebrata) in testis and 137 other cell types or tissues"/>
</dbReference>
<dbReference type="ExpressionAtlas" id="Q8IV42">
    <property type="expression patterns" value="baseline and differential"/>
</dbReference>
<dbReference type="GO" id="GO:0005524">
    <property type="term" value="F:ATP binding"/>
    <property type="evidence" value="ECO:0007669"/>
    <property type="project" value="UniProtKB-KW"/>
</dbReference>
<dbReference type="GO" id="GO:0016301">
    <property type="term" value="F:kinase activity"/>
    <property type="evidence" value="ECO:0000318"/>
    <property type="project" value="GO_Central"/>
</dbReference>
<dbReference type="GO" id="GO:0043915">
    <property type="term" value="F:L-seryl-tRNA(Sec) kinase activity"/>
    <property type="evidence" value="ECO:0007669"/>
    <property type="project" value="UniProtKB-EC"/>
</dbReference>
<dbReference type="GO" id="GO:0000049">
    <property type="term" value="F:tRNA binding"/>
    <property type="evidence" value="ECO:0000318"/>
    <property type="project" value="GO_Central"/>
</dbReference>
<dbReference type="GO" id="GO:0006412">
    <property type="term" value="P:translation"/>
    <property type="evidence" value="ECO:0007669"/>
    <property type="project" value="UniProtKB-KW"/>
</dbReference>
<dbReference type="Gene3D" id="3.40.50.300">
    <property type="entry name" value="P-loop containing nucleotide triphosphate hydrolases"/>
    <property type="match status" value="1"/>
</dbReference>
<dbReference type="InterPro" id="IPR013641">
    <property type="entry name" value="KTI12/PSTK"/>
</dbReference>
<dbReference type="InterPro" id="IPR020028">
    <property type="entry name" value="L-seryl-tRNA_Sec_kinase_euk"/>
</dbReference>
<dbReference type="InterPro" id="IPR027417">
    <property type="entry name" value="P-loop_NTPase"/>
</dbReference>
<dbReference type="InterPro" id="IPR052648">
    <property type="entry name" value="Ser-tRNA(Sec)_kinase"/>
</dbReference>
<dbReference type="NCBIfam" id="TIGR03575">
    <property type="entry name" value="selen_PSTK_euk"/>
    <property type="match status" value="1"/>
</dbReference>
<dbReference type="PANTHER" id="PTHR20873">
    <property type="entry name" value="L-SERYL-TRNA(SEC) KINASE"/>
    <property type="match status" value="1"/>
</dbReference>
<dbReference type="PANTHER" id="PTHR20873:SF0">
    <property type="entry name" value="L-SERYL-TRNA(SEC) KINASE"/>
    <property type="match status" value="1"/>
</dbReference>
<dbReference type="Pfam" id="PF08433">
    <property type="entry name" value="KTI12"/>
    <property type="match status" value="1"/>
</dbReference>
<dbReference type="SUPFAM" id="SSF52540">
    <property type="entry name" value="P-loop containing nucleoside triphosphate hydrolases"/>
    <property type="match status" value="2"/>
</dbReference>
<gene>
    <name type="primary">PSTK</name>
    <name type="synonym">C10orf89</name>
</gene>
<proteinExistence type="evidence at protein level"/>
<organism>
    <name type="scientific">Homo sapiens</name>
    <name type="common">Human</name>
    <dbReference type="NCBI Taxonomy" id="9606"/>
    <lineage>
        <taxon>Eukaryota</taxon>
        <taxon>Metazoa</taxon>
        <taxon>Chordata</taxon>
        <taxon>Craniata</taxon>
        <taxon>Vertebrata</taxon>
        <taxon>Euteleostomi</taxon>
        <taxon>Mammalia</taxon>
        <taxon>Eutheria</taxon>
        <taxon>Euarchontoglires</taxon>
        <taxon>Primates</taxon>
        <taxon>Haplorrhini</taxon>
        <taxon>Catarrhini</taxon>
        <taxon>Hominidae</taxon>
        <taxon>Homo</taxon>
    </lineage>
</organism>
<name>PSTK_HUMAN</name>
<accession>Q8IV42</accession>
<accession>Q6ZSS9</accession>
<comment type="function">
    <text evidence="1">Specifically phosphorylates seryl-tRNA(Sec) to O-phosphoseryl-tRNA(Sec), an activated intermediate for selenocysteine biosynthesis.</text>
</comment>
<comment type="catalytic activity">
    <reaction>
        <text>L-seryl-tRNA(Sec) + ATP = O-phospho-L-seryl-tRNA(Sec) + ADP</text>
        <dbReference type="Rhea" id="RHEA:25037"/>
        <dbReference type="Rhea" id="RHEA-COMP:9742"/>
        <dbReference type="Rhea" id="RHEA-COMP:9947"/>
        <dbReference type="ChEBI" id="CHEBI:30616"/>
        <dbReference type="ChEBI" id="CHEBI:78533"/>
        <dbReference type="ChEBI" id="CHEBI:78551"/>
        <dbReference type="ChEBI" id="CHEBI:456216"/>
        <dbReference type="EC" id="2.7.1.164"/>
    </reaction>
</comment>
<comment type="cofactor">
    <cofactor evidence="1">
        <name>Mg(2+)</name>
        <dbReference type="ChEBI" id="CHEBI:18420"/>
    </cofactor>
</comment>
<comment type="pathway">
    <text>Aminoacyl-tRNA biosynthesis; selenocysteinyl-tRNA(Sec) biosynthesis; selenocysteinyl-tRNA(Sec) from L-seryl-tRNA(Sec) (archaeal/eukaryal route): step 1/2.</text>
</comment>
<comment type="alternative products">
    <event type="alternative splicing"/>
    <isoform>
        <id>Q8IV42-1</id>
        <name>1</name>
        <sequence type="displayed"/>
    </isoform>
    <isoform>
        <id>Q8IV42-2</id>
        <name>2</name>
        <sequence type="described" ref="VSP_014989"/>
    </isoform>
</comment>
<comment type="similarity">
    <text evidence="5">Belongs to the L-seryl-tRNA(Sec) kinase family.</text>
</comment>
<feature type="chain" id="PRO_0000097080" description="L-seryl-tRNA(Sec) kinase">
    <location>
        <begin position="1"/>
        <end position="348"/>
    </location>
</feature>
<feature type="binding site" evidence="2">
    <location>
        <begin position="25"/>
        <end position="32"/>
    </location>
    <ligand>
        <name>ATP</name>
        <dbReference type="ChEBI" id="CHEBI:30616"/>
    </ligand>
</feature>
<feature type="splice variant" id="VSP_014989" description="In isoform 2." evidence="4">
    <original>DTDRIICSTNILHKTDQTLRRIVSQTMKEAKGNQEAFSEMTFKQRWVRANHAAIWRIILGNEHIKCRSAKVGWLQCCRIEKRPLSTG</original>
    <variation>VNFQCKFNVNEKEQLFVGRSFEPIIKCE</variation>
    <location>
        <begin position="262"/>
        <end position="348"/>
    </location>
</feature>
<feature type="sequence variant" id="VAR_028156" description="In dbSNP:rs3736582." evidence="3">
    <original>G</original>
    <variation>R</variation>
    <location>
        <position position="206"/>
    </location>
</feature>
<sequence length="348" mass="39527">MKTAENIRGTGSDGPRKRGLCVLCGLPAAGKSTFARALAHRLQQEQGWAIGVVAYDDVMPDAFLAGARARPAPSQWKLLRQELLKYLEYFLMAVINGCQMSVPPNRTEAMWEDFITCLKDQDLIFSAAFEAQSCYLLTKTAVSRPLFLVLDDNFYYQSMRYEVYQLARKYSLGFCQLFLDCPLETCLQRNGQRPQALPPETIHLMGRKLEKPNPEKNAWEHNSLTIPSPACASEASLEVTDLLLTALENPVKYAEDNMEQKDTDRIICSTNILHKTDQTLRRIVSQTMKEAKGNQEAFSEMTFKQRWVRANHAAIWRIILGNEHIKCRSAKVGWLQCCRIEKRPLSTG</sequence>
<protein>
    <recommendedName>
        <fullName>L-seryl-tRNA(Sec) kinase</fullName>
        <ecNumber>2.7.1.164</ecNumber>
    </recommendedName>
    <alternativeName>
        <fullName>O-phosphoseryl-tRNA(Sec) kinase</fullName>
    </alternativeName>
</protein>
<keyword id="KW-0025">Alternative splicing</keyword>
<keyword id="KW-0067">ATP-binding</keyword>
<keyword id="KW-0418">Kinase</keyword>
<keyword id="KW-0460">Magnesium</keyword>
<keyword id="KW-0547">Nucleotide-binding</keyword>
<keyword id="KW-0648">Protein biosynthesis</keyword>
<keyword id="KW-1267">Proteomics identification</keyword>
<keyword id="KW-1185">Reference proteome</keyword>
<keyword id="KW-0808">Transferase</keyword>
<reference key="1">
    <citation type="journal article" date="2004" name="Nat. Genet.">
        <title>Complete sequencing and characterization of 21,243 full-length human cDNAs.</title>
        <authorList>
            <person name="Ota T."/>
            <person name="Suzuki Y."/>
            <person name="Nishikawa T."/>
            <person name="Otsuki T."/>
            <person name="Sugiyama T."/>
            <person name="Irie R."/>
            <person name="Wakamatsu A."/>
            <person name="Hayashi K."/>
            <person name="Sato H."/>
            <person name="Nagai K."/>
            <person name="Kimura K."/>
            <person name="Makita H."/>
            <person name="Sekine M."/>
            <person name="Obayashi M."/>
            <person name="Nishi T."/>
            <person name="Shibahara T."/>
            <person name="Tanaka T."/>
            <person name="Ishii S."/>
            <person name="Yamamoto J."/>
            <person name="Saito K."/>
            <person name="Kawai Y."/>
            <person name="Isono Y."/>
            <person name="Nakamura Y."/>
            <person name="Nagahari K."/>
            <person name="Murakami K."/>
            <person name="Yasuda T."/>
            <person name="Iwayanagi T."/>
            <person name="Wagatsuma M."/>
            <person name="Shiratori A."/>
            <person name="Sudo H."/>
            <person name="Hosoiri T."/>
            <person name="Kaku Y."/>
            <person name="Kodaira H."/>
            <person name="Kondo H."/>
            <person name="Sugawara M."/>
            <person name="Takahashi M."/>
            <person name="Kanda K."/>
            <person name="Yokoi T."/>
            <person name="Furuya T."/>
            <person name="Kikkawa E."/>
            <person name="Omura Y."/>
            <person name="Abe K."/>
            <person name="Kamihara K."/>
            <person name="Katsuta N."/>
            <person name="Sato K."/>
            <person name="Tanikawa M."/>
            <person name="Yamazaki M."/>
            <person name="Ninomiya K."/>
            <person name="Ishibashi T."/>
            <person name="Yamashita H."/>
            <person name="Murakawa K."/>
            <person name="Fujimori K."/>
            <person name="Tanai H."/>
            <person name="Kimata M."/>
            <person name="Watanabe M."/>
            <person name="Hiraoka S."/>
            <person name="Chiba Y."/>
            <person name="Ishida S."/>
            <person name="Ono Y."/>
            <person name="Takiguchi S."/>
            <person name="Watanabe S."/>
            <person name="Yosida M."/>
            <person name="Hotuta T."/>
            <person name="Kusano J."/>
            <person name="Kanehori K."/>
            <person name="Takahashi-Fujii A."/>
            <person name="Hara H."/>
            <person name="Tanase T.-O."/>
            <person name="Nomura Y."/>
            <person name="Togiya S."/>
            <person name="Komai F."/>
            <person name="Hara R."/>
            <person name="Takeuchi K."/>
            <person name="Arita M."/>
            <person name="Imose N."/>
            <person name="Musashino K."/>
            <person name="Yuuki H."/>
            <person name="Oshima A."/>
            <person name="Sasaki N."/>
            <person name="Aotsuka S."/>
            <person name="Yoshikawa Y."/>
            <person name="Matsunawa H."/>
            <person name="Ichihara T."/>
            <person name="Shiohata N."/>
            <person name="Sano S."/>
            <person name="Moriya S."/>
            <person name="Momiyama H."/>
            <person name="Satoh N."/>
            <person name="Takami S."/>
            <person name="Terashima Y."/>
            <person name="Suzuki O."/>
            <person name="Nakagawa S."/>
            <person name="Senoh A."/>
            <person name="Mizoguchi H."/>
            <person name="Goto Y."/>
            <person name="Shimizu F."/>
            <person name="Wakebe H."/>
            <person name="Hishigaki H."/>
            <person name="Watanabe T."/>
            <person name="Sugiyama A."/>
            <person name="Takemoto M."/>
            <person name="Kawakami B."/>
            <person name="Yamazaki M."/>
            <person name="Watanabe K."/>
            <person name="Kumagai A."/>
            <person name="Itakura S."/>
            <person name="Fukuzumi Y."/>
            <person name="Fujimori Y."/>
            <person name="Komiyama M."/>
            <person name="Tashiro H."/>
            <person name="Tanigami A."/>
            <person name="Fujiwara T."/>
            <person name="Ono T."/>
            <person name="Yamada K."/>
            <person name="Fujii Y."/>
            <person name="Ozaki K."/>
            <person name="Hirao M."/>
            <person name="Ohmori Y."/>
            <person name="Kawabata A."/>
            <person name="Hikiji T."/>
            <person name="Kobatake N."/>
            <person name="Inagaki H."/>
            <person name="Ikema Y."/>
            <person name="Okamoto S."/>
            <person name="Okitani R."/>
            <person name="Kawakami T."/>
            <person name="Noguchi S."/>
            <person name="Itoh T."/>
            <person name="Shigeta K."/>
            <person name="Senba T."/>
            <person name="Matsumura K."/>
            <person name="Nakajima Y."/>
            <person name="Mizuno T."/>
            <person name="Morinaga M."/>
            <person name="Sasaki M."/>
            <person name="Togashi T."/>
            <person name="Oyama M."/>
            <person name="Hata H."/>
            <person name="Watanabe M."/>
            <person name="Komatsu T."/>
            <person name="Mizushima-Sugano J."/>
            <person name="Satoh T."/>
            <person name="Shirai Y."/>
            <person name="Takahashi Y."/>
            <person name="Nakagawa K."/>
            <person name="Okumura K."/>
            <person name="Nagase T."/>
            <person name="Nomura N."/>
            <person name="Kikuchi H."/>
            <person name="Masuho Y."/>
            <person name="Yamashita R."/>
            <person name="Nakai K."/>
            <person name="Yada T."/>
            <person name="Nakamura Y."/>
            <person name="Ohara O."/>
            <person name="Isogai T."/>
            <person name="Sugano S."/>
        </authorList>
    </citation>
    <scope>NUCLEOTIDE SEQUENCE [LARGE SCALE MRNA] (ISOFORM 2)</scope>
    <source>
        <tissue>Corpus callosum</tissue>
    </source>
</reference>
<reference key="2">
    <citation type="journal article" date="2004" name="Genome Res.">
        <title>The status, quality, and expansion of the NIH full-length cDNA project: the Mammalian Gene Collection (MGC).</title>
        <authorList>
            <consortium name="The MGC Project Team"/>
        </authorList>
    </citation>
    <scope>NUCLEOTIDE SEQUENCE [LARGE SCALE MRNA] (ISOFORM 1)</scope>
    <scope>VARIANT ARG-206</scope>
    <source>
        <tissue>Colon</tissue>
    </source>
</reference>
<reference key="3">
    <citation type="journal article" date="2012" name="Proc. Natl. Acad. Sci. U.S.A.">
        <title>N-terminal acetylome analyses and functional insights of the N-terminal acetyltransferase NatB.</title>
        <authorList>
            <person name="Van Damme P."/>
            <person name="Lasa M."/>
            <person name="Polevoda B."/>
            <person name="Gazquez C."/>
            <person name="Elosegui-Artola A."/>
            <person name="Kim D.S."/>
            <person name="De Juan-Pardo E."/>
            <person name="Demeyer K."/>
            <person name="Hole K."/>
            <person name="Larrea E."/>
            <person name="Timmerman E."/>
            <person name="Prieto J."/>
            <person name="Arnesen T."/>
            <person name="Sherman F."/>
            <person name="Gevaert K."/>
            <person name="Aldabe R."/>
        </authorList>
    </citation>
    <scope>IDENTIFICATION BY MASS SPECTROMETRY [LARGE SCALE ANALYSIS]</scope>
</reference>